<name>ALGF_PSEFL</name>
<proteinExistence type="inferred from homology"/>
<evidence type="ECO:0000250" key="1"/>
<evidence type="ECO:0000255" key="2"/>
<evidence type="ECO:0000305" key="3"/>
<gene>
    <name type="primary">algF</name>
</gene>
<sequence>MTFTTTPRRLAKTLALAAGMSVVSLSAFAGDAALYGPVAPKGSSFVRVYNASNQEVSATVGSTNLSEVAPLASSDFSFMPGGDYSAKIGSQTVPVKLAADHYYTLVNNSSGQPQLIEEPPFKNKQKSLVRVQNLSDKALTLKTADGKTDVVKSVAAKGRGEREINPVKVSLALYDGDKKVGDVKPVALERGEAAVLYVTGSGSSISPVWVKRPVSTR</sequence>
<accession>P59791</accession>
<organism>
    <name type="scientific">Pseudomonas fluorescens</name>
    <dbReference type="NCBI Taxonomy" id="294"/>
    <lineage>
        <taxon>Bacteria</taxon>
        <taxon>Pseudomonadati</taxon>
        <taxon>Pseudomonadota</taxon>
        <taxon>Gammaproteobacteria</taxon>
        <taxon>Pseudomonadales</taxon>
        <taxon>Pseudomonadaceae</taxon>
        <taxon>Pseudomonas</taxon>
    </lineage>
</organism>
<dbReference type="EMBL" id="AF527790">
    <property type="protein sequence ID" value="AAP46699.1"/>
    <property type="molecule type" value="Genomic_DNA"/>
</dbReference>
<dbReference type="RefSeq" id="WP_012722326.1">
    <property type="nucleotide sequence ID" value="NZ_CABVHZ010000006.1"/>
</dbReference>
<dbReference type="SMR" id="P59791"/>
<dbReference type="PATRIC" id="fig|294.129.peg.5010"/>
<dbReference type="eggNOG" id="ENOG5032T05">
    <property type="taxonomic scope" value="Bacteria"/>
</dbReference>
<dbReference type="UniPathway" id="UPA00286"/>
<dbReference type="GO" id="GO:0042597">
    <property type="term" value="C:periplasmic space"/>
    <property type="evidence" value="ECO:0007669"/>
    <property type="project" value="UniProtKB-SubCell"/>
</dbReference>
<dbReference type="GO" id="GO:0042121">
    <property type="term" value="P:alginic acid biosynthetic process"/>
    <property type="evidence" value="ECO:0007669"/>
    <property type="project" value="UniProtKB-UniPathway"/>
</dbReference>
<dbReference type="InterPro" id="IPR035422">
    <property type="entry name" value="AlgF"/>
</dbReference>
<dbReference type="Pfam" id="PF11182">
    <property type="entry name" value="AlgF"/>
    <property type="match status" value="1"/>
</dbReference>
<keyword id="KW-0016">Alginate biosynthesis</keyword>
<keyword id="KW-0574">Periplasm</keyword>
<keyword id="KW-0732">Signal</keyword>
<reference key="1">
    <citation type="journal article" date="2003" name="J. Bacteriol.">
        <title>The Pseudomonas fluorescens AlgG protein, but not its mannuronan C-5-epimerase activity, is needed for alginate polymer formation.</title>
        <authorList>
            <person name="Gimmestad M."/>
            <person name="Sletta H."/>
            <person name="Ertesvaag H."/>
            <person name="Bakkevig K."/>
            <person name="Jain S."/>
            <person name="Suh S.-J."/>
            <person name="Skjaak-Braek G."/>
            <person name="Ellingsen T.E."/>
            <person name="Ohman D.E."/>
            <person name="Valla S."/>
        </authorList>
    </citation>
    <scope>NUCLEOTIDE SEQUENCE [GENOMIC DNA]</scope>
    <source>
        <strain>ATCC 17397 / DSM 50091 / CIP 73.25 / NCIMB 10525 / 12</strain>
    </source>
</reference>
<protein>
    <recommendedName>
        <fullName>Alginate biosynthesis protein AlgF</fullName>
    </recommendedName>
</protein>
<feature type="signal peptide" evidence="2">
    <location>
        <begin position="1"/>
        <end position="29"/>
    </location>
</feature>
<feature type="chain" id="PRO_0000001116" description="Alginate biosynthesis protein AlgF">
    <location>
        <begin position="30"/>
        <end position="217"/>
    </location>
</feature>
<comment type="function">
    <text evidence="1">Together with AlgI and AlgJ, forms an inner membrane complex which probably interacts with the alginate polymerization-transport complex and adds acetyl groups at the O-2 and O-3 positions of mannuronate residues. Acetylation of alginate is important for the architecture of biofilms and increases the ability of alginate to act as a defense barrier (By similarity).</text>
</comment>
<comment type="pathway">
    <text>Glycan biosynthesis; alginate biosynthesis.</text>
</comment>
<comment type="subcellular location">
    <subcellularLocation>
        <location evidence="1">Periplasm</location>
    </subcellularLocation>
</comment>
<comment type="similarity">
    <text evidence="3">Belongs to the AlgF family.</text>
</comment>